<reference key="1">
    <citation type="journal article" date="2002" name="Proc. Natl. Acad. Sci. U.S.A.">
        <title>The complete genome of hyperthermophile Methanopyrus kandleri AV19 and monophyly of archaeal methanogens.</title>
        <authorList>
            <person name="Slesarev A.I."/>
            <person name="Mezhevaya K.V."/>
            <person name="Makarova K.S."/>
            <person name="Polushin N.N."/>
            <person name="Shcherbinina O.V."/>
            <person name="Shakhova V.V."/>
            <person name="Belova G.I."/>
            <person name="Aravind L."/>
            <person name="Natale D.A."/>
            <person name="Rogozin I.B."/>
            <person name="Tatusov R.L."/>
            <person name="Wolf Y.I."/>
            <person name="Stetter K.O."/>
            <person name="Malykh A.G."/>
            <person name="Koonin E.V."/>
            <person name="Kozyavkin S.A."/>
        </authorList>
    </citation>
    <scope>NUCLEOTIDE SEQUENCE [LARGE SCALE GENOMIC DNA]</scope>
    <source>
        <strain>AV19 / DSM 6324 / JCM 9639 / NBRC 100938</strain>
    </source>
</reference>
<evidence type="ECO:0000255" key="1">
    <source>
        <dbReference type="HAMAP-Rule" id="MF_00214"/>
    </source>
</evidence>
<comment type="function">
    <text evidence="1">Involved in the third step of the chorismate pathway, which leads to the biosynthesis of aromatic amino acids. Catalyzes the cis-dehydration of 3-dehydroquinate (DHQ) and introduces the first double bond of the aromatic ring to yield 3-dehydroshikimate.</text>
</comment>
<comment type="catalytic activity">
    <reaction evidence="1">
        <text>3-dehydroquinate = 3-dehydroshikimate + H2O</text>
        <dbReference type="Rhea" id="RHEA:21096"/>
        <dbReference type="ChEBI" id="CHEBI:15377"/>
        <dbReference type="ChEBI" id="CHEBI:16630"/>
        <dbReference type="ChEBI" id="CHEBI:32364"/>
        <dbReference type="EC" id="4.2.1.10"/>
    </reaction>
</comment>
<comment type="pathway">
    <text evidence="1">Metabolic intermediate biosynthesis; chorismate biosynthesis; chorismate from D-erythrose 4-phosphate and phosphoenolpyruvate: step 3/7.</text>
</comment>
<comment type="subunit">
    <text evidence="1">Homodimer.</text>
</comment>
<comment type="similarity">
    <text evidence="1">Belongs to the type-I 3-dehydroquinase family.</text>
</comment>
<proteinExistence type="inferred from homology"/>
<name>AROD_METKA</name>
<protein>
    <recommendedName>
        <fullName evidence="1">3-dehydroquinate dehydratase</fullName>
        <shortName evidence="1">3-dehydroquinase</shortName>
        <ecNumber evidence="1">4.2.1.10</ecNumber>
    </recommendedName>
    <alternativeName>
        <fullName evidence="1">Type I DHQase</fullName>
    </alternativeName>
    <alternativeName>
        <fullName evidence="1">Type I dehydroquinase</fullName>
        <shortName evidence="1">DHQ1</shortName>
    </alternativeName>
</protein>
<keyword id="KW-0028">Amino-acid biosynthesis</keyword>
<keyword id="KW-0057">Aromatic amino acid biosynthesis</keyword>
<keyword id="KW-0456">Lyase</keyword>
<keyword id="KW-1185">Reference proteome</keyword>
<keyword id="KW-0704">Schiff base</keyword>
<organism>
    <name type="scientific">Methanopyrus kandleri (strain AV19 / DSM 6324 / JCM 9639 / NBRC 100938)</name>
    <dbReference type="NCBI Taxonomy" id="190192"/>
    <lineage>
        <taxon>Archaea</taxon>
        <taxon>Methanobacteriati</taxon>
        <taxon>Methanobacteriota</taxon>
        <taxon>Methanomada group</taxon>
        <taxon>Methanopyri</taxon>
        <taxon>Methanopyrales</taxon>
        <taxon>Methanopyraceae</taxon>
        <taxon>Methanopyrus</taxon>
    </lineage>
</organism>
<gene>
    <name evidence="1" type="primary">aroD</name>
    <name type="ordered locus">MK0429</name>
</gene>
<feature type="chain" id="PRO_0000138830" description="3-dehydroquinate dehydratase">
    <location>
        <begin position="1"/>
        <end position="215"/>
    </location>
</feature>
<feature type="active site" description="Proton donor/acceptor" evidence="1">
    <location>
        <position position="114"/>
    </location>
</feature>
<feature type="active site" description="Schiff-base intermediate with substrate" evidence="1">
    <location>
        <position position="140"/>
    </location>
</feature>
<feature type="binding site" evidence="1">
    <location>
        <begin position="30"/>
        <end position="32"/>
    </location>
    <ligand>
        <name>3-dehydroquinate</name>
        <dbReference type="ChEBI" id="CHEBI:32364"/>
    </ligand>
</feature>
<feature type="binding site" evidence="1">
    <location>
        <position position="62"/>
    </location>
    <ligand>
        <name>3-dehydroquinate</name>
        <dbReference type="ChEBI" id="CHEBI:32364"/>
    </ligand>
</feature>
<feature type="binding site" evidence="1">
    <location>
        <position position="178"/>
    </location>
    <ligand>
        <name>3-dehydroquinate</name>
        <dbReference type="ChEBI" id="CHEBI:32364"/>
    </ligand>
</feature>
<feature type="binding site" evidence="1">
    <location>
        <position position="201"/>
    </location>
    <ligand>
        <name>3-dehydroquinate</name>
        <dbReference type="ChEBI" id="CHEBI:32364"/>
    </ligand>
</feature>
<accession>Q8TY76</accession>
<sequence>MIIATLTGRTIEDMVELAIEAVEQGADALEVRLDYLENLDMSTALRAVRECTRYERVVATLRREEEGGLYKGDEDRRLEILERVSSEADYVDLELDVAEEEIISPSCETIVSYHNFENTPPKEELIGIRDRCAELGDVAKVVTMARGHEDALRILEVVRTAEAPTIGFAMGEEAKYTRVVSVLIGGFATYAAVRKKAAPGQLTVEETRKLLELLG</sequence>
<dbReference type="EC" id="4.2.1.10" evidence="1"/>
<dbReference type="EMBL" id="AE009439">
    <property type="protein sequence ID" value="AAM01644.1"/>
    <property type="molecule type" value="Genomic_DNA"/>
</dbReference>
<dbReference type="RefSeq" id="WP_011018799.1">
    <property type="nucleotide sequence ID" value="NC_003551.1"/>
</dbReference>
<dbReference type="SMR" id="Q8TY76"/>
<dbReference type="FunCoup" id="Q8TY76">
    <property type="interactions" value="69"/>
</dbReference>
<dbReference type="STRING" id="190192.MK0429"/>
<dbReference type="PaxDb" id="190192-MK0429"/>
<dbReference type="EnsemblBacteria" id="AAM01644">
    <property type="protein sequence ID" value="AAM01644"/>
    <property type="gene ID" value="MK0429"/>
</dbReference>
<dbReference type="GeneID" id="1477732"/>
<dbReference type="KEGG" id="mka:MK0429"/>
<dbReference type="HOGENOM" id="CLU_064444_2_1_2"/>
<dbReference type="InParanoid" id="Q8TY76"/>
<dbReference type="OrthoDB" id="34329at2157"/>
<dbReference type="UniPathway" id="UPA00053">
    <property type="reaction ID" value="UER00086"/>
</dbReference>
<dbReference type="Proteomes" id="UP000001826">
    <property type="component" value="Chromosome"/>
</dbReference>
<dbReference type="GO" id="GO:0003855">
    <property type="term" value="F:3-dehydroquinate dehydratase activity"/>
    <property type="evidence" value="ECO:0007669"/>
    <property type="project" value="UniProtKB-UniRule"/>
</dbReference>
<dbReference type="GO" id="GO:0046279">
    <property type="term" value="P:3,4-dihydroxybenzoate biosynthetic process"/>
    <property type="evidence" value="ECO:0007669"/>
    <property type="project" value="UniProtKB-ARBA"/>
</dbReference>
<dbReference type="GO" id="GO:0008652">
    <property type="term" value="P:amino acid biosynthetic process"/>
    <property type="evidence" value="ECO:0007669"/>
    <property type="project" value="UniProtKB-KW"/>
</dbReference>
<dbReference type="GO" id="GO:0009073">
    <property type="term" value="P:aromatic amino acid family biosynthetic process"/>
    <property type="evidence" value="ECO:0007669"/>
    <property type="project" value="UniProtKB-KW"/>
</dbReference>
<dbReference type="GO" id="GO:0009423">
    <property type="term" value="P:chorismate biosynthetic process"/>
    <property type="evidence" value="ECO:0007669"/>
    <property type="project" value="UniProtKB-UniRule"/>
</dbReference>
<dbReference type="CDD" id="cd00502">
    <property type="entry name" value="DHQase_I"/>
    <property type="match status" value="1"/>
</dbReference>
<dbReference type="Gene3D" id="3.20.20.70">
    <property type="entry name" value="Aldolase class I"/>
    <property type="match status" value="1"/>
</dbReference>
<dbReference type="HAMAP" id="MF_00214">
    <property type="entry name" value="AroD"/>
    <property type="match status" value="1"/>
</dbReference>
<dbReference type="InterPro" id="IPR013785">
    <property type="entry name" value="Aldolase_TIM"/>
</dbReference>
<dbReference type="InterPro" id="IPR001381">
    <property type="entry name" value="DHquinase_I"/>
</dbReference>
<dbReference type="InterPro" id="IPR050146">
    <property type="entry name" value="Type-I_3-dehydroquinase"/>
</dbReference>
<dbReference type="NCBIfam" id="TIGR01093">
    <property type="entry name" value="aroD"/>
    <property type="match status" value="1"/>
</dbReference>
<dbReference type="PANTHER" id="PTHR43699">
    <property type="entry name" value="3-DEHYDROQUINATE DEHYDRATASE"/>
    <property type="match status" value="1"/>
</dbReference>
<dbReference type="PANTHER" id="PTHR43699:SF1">
    <property type="entry name" value="3-DEHYDROQUINATE DEHYDRATASE"/>
    <property type="match status" value="1"/>
</dbReference>
<dbReference type="Pfam" id="PF01487">
    <property type="entry name" value="DHquinase_I"/>
    <property type="match status" value="1"/>
</dbReference>
<dbReference type="SUPFAM" id="SSF51569">
    <property type="entry name" value="Aldolase"/>
    <property type="match status" value="1"/>
</dbReference>